<accession>A9NC18</accession>
<reference key="1">
    <citation type="submission" date="2007-11" db="EMBL/GenBank/DDBJ databases">
        <title>Genome sequencing of phylogenetically and phenotypically diverse Coxiella burnetii isolates.</title>
        <authorList>
            <person name="Seshadri R."/>
            <person name="Samuel J.E."/>
        </authorList>
    </citation>
    <scope>NUCLEOTIDE SEQUENCE [LARGE SCALE GENOMIC DNA]</scope>
    <source>
        <strain>RSA 331 / Henzerling II</strain>
    </source>
</reference>
<name>AROA_COXBR</name>
<dbReference type="EC" id="2.5.1.19" evidence="1"/>
<dbReference type="EMBL" id="CP000890">
    <property type="protein sequence ID" value="ABX77767.1"/>
    <property type="molecule type" value="Genomic_DNA"/>
</dbReference>
<dbReference type="RefSeq" id="WP_012220247.1">
    <property type="nucleotide sequence ID" value="NC_010117.1"/>
</dbReference>
<dbReference type="SMR" id="A9NC18"/>
<dbReference type="KEGG" id="cbs:COXBURSA331_A0640"/>
<dbReference type="HOGENOM" id="CLU_024321_0_1_6"/>
<dbReference type="UniPathway" id="UPA00053">
    <property type="reaction ID" value="UER00089"/>
</dbReference>
<dbReference type="GO" id="GO:0005737">
    <property type="term" value="C:cytoplasm"/>
    <property type="evidence" value="ECO:0007669"/>
    <property type="project" value="UniProtKB-SubCell"/>
</dbReference>
<dbReference type="GO" id="GO:0003866">
    <property type="term" value="F:3-phosphoshikimate 1-carboxyvinyltransferase activity"/>
    <property type="evidence" value="ECO:0007669"/>
    <property type="project" value="UniProtKB-UniRule"/>
</dbReference>
<dbReference type="GO" id="GO:0008652">
    <property type="term" value="P:amino acid biosynthetic process"/>
    <property type="evidence" value="ECO:0007669"/>
    <property type="project" value="UniProtKB-KW"/>
</dbReference>
<dbReference type="GO" id="GO:0009073">
    <property type="term" value="P:aromatic amino acid family biosynthetic process"/>
    <property type="evidence" value="ECO:0007669"/>
    <property type="project" value="UniProtKB-KW"/>
</dbReference>
<dbReference type="GO" id="GO:0009423">
    <property type="term" value="P:chorismate biosynthetic process"/>
    <property type="evidence" value="ECO:0007669"/>
    <property type="project" value="UniProtKB-UniRule"/>
</dbReference>
<dbReference type="CDD" id="cd01556">
    <property type="entry name" value="EPSP_synthase"/>
    <property type="match status" value="1"/>
</dbReference>
<dbReference type="FunFam" id="3.65.10.10:FF:000005">
    <property type="entry name" value="3-phosphoshikimate 1-carboxyvinyltransferase"/>
    <property type="match status" value="1"/>
</dbReference>
<dbReference type="FunFam" id="3.65.10.10:FF:000006">
    <property type="entry name" value="3-phosphoshikimate 1-carboxyvinyltransferase"/>
    <property type="match status" value="1"/>
</dbReference>
<dbReference type="Gene3D" id="3.65.10.10">
    <property type="entry name" value="Enolpyruvate transferase domain"/>
    <property type="match status" value="2"/>
</dbReference>
<dbReference type="HAMAP" id="MF_00210">
    <property type="entry name" value="EPSP_synth"/>
    <property type="match status" value="1"/>
</dbReference>
<dbReference type="InterPro" id="IPR001986">
    <property type="entry name" value="Enolpyruvate_Tfrase_dom"/>
</dbReference>
<dbReference type="InterPro" id="IPR036968">
    <property type="entry name" value="Enolpyruvate_Tfrase_sf"/>
</dbReference>
<dbReference type="InterPro" id="IPR006264">
    <property type="entry name" value="EPSP_synthase"/>
</dbReference>
<dbReference type="InterPro" id="IPR023193">
    <property type="entry name" value="EPSP_synthase_CS"/>
</dbReference>
<dbReference type="InterPro" id="IPR013792">
    <property type="entry name" value="RNA3'P_cycl/enolpyr_Trfase_a/b"/>
</dbReference>
<dbReference type="NCBIfam" id="TIGR01356">
    <property type="entry name" value="aroA"/>
    <property type="match status" value="1"/>
</dbReference>
<dbReference type="PANTHER" id="PTHR21090">
    <property type="entry name" value="AROM/DEHYDROQUINATE SYNTHASE"/>
    <property type="match status" value="1"/>
</dbReference>
<dbReference type="PANTHER" id="PTHR21090:SF5">
    <property type="entry name" value="PENTAFUNCTIONAL AROM POLYPEPTIDE"/>
    <property type="match status" value="1"/>
</dbReference>
<dbReference type="Pfam" id="PF00275">
    <property type="entry name" value="EPSP_synthase"/>
    <property type="match status" value="1"/>
</dbReference>
<dbReference type="PIRSF" id="PIRSF000505">
    <property type="entry name" value="EPSPS"/>
    <property type="match status" value="1"/>
</dbReference>
<dbReference type="SUPFAM" id="SSF55205">
    <property type="entry name" value="EPT/RTPC-like"/>
    <property type="match status" value="1"/>
</dbReference>
<dbReference type="PROSITE" id="PS00104">
    <property type="entry name" value="EPSP_SYNTHASE_1"/>
    <property type="match status" value="1"/>
</dbReference>
<dbReference type="PROSITE" id="PS00885">
    <property type="entry name" value="EPSP_SYNTHASE_2"/>
    <property type="match status" value="1"/>
</dbReference>
<protein>
    <recommendedName>
        <fullName evidence="1">3-phosphoshikimate 1-carboxyvinyltransferase</fullName>
        <ecNumber evidence="1">2.5.1.19</ecNumber>
    </recommendedName>
    <alternativeName>
        <fullName evidence="1">5-enolpyruvylshikimate-3-phosphate synthase</fullName>
        <shortName evidence="1">EPSP synthase</shortName>
        <shortName evidence="1">EPSPS</shortName>
    </alternativeName>
</protein>
<feature type="chain" id="PRO_1000077986" description="3-phosphoshikimate 1-carboxyvinyltransferase">
    <location>
        <begin position="1"/>
        <end position="438"/>
    </location>
</feature>
<feature type="active site" description="Proton acceptor" evidence="1">
    <location>
        <position position="315"/>
    </location>
</feature>
<feature type="binding site" evidence="1">
    <location>
        <position position="21"/>
    </location>
    <ligand>
        <name>3-phosphoshikimate</name>
        <dbReference type="ChEBI" id="CHEBI:145989"/>
    </ligand>
</feature>
<feature type="binding site" evidence="1">
    <location>
        <position position="21"/>
    </location>
    <ligand>
        <name>phosphoenolpyruvate</name>
        <dbReference type="ChEBI" id="CHEBI:58702"/>
    </ligand>
</feature>
<feature type="binding site" evidence="1">
    <location>
        <position position="22"/>
    </location>
    <ligand>
        <name>3-phosphoshikimate</name>
        <dbReference type="ChEBI" id="CHEBI:145989"/>
    </ligand>
</feature>
<feature type="binding site" evidence="1">
    <location>
        <position position="26"/>
    </location>
    <ligand>
        <name>3-phosphoshikimate</name>
        <dbReference type="ChEBI" id="CHEBI:145989"/>
    </ligand>
</feature>
<feature type="binding site" evidence="1">
    <location>
        <position position="95"/>
    </location>
    <ligand>
        <name>phosphoenolpyruvate</name>
        <dbReference type="ChEBI" id="CHEBI:58702"/>
    </ligand>
</feature>
<feature type="binding site" evidence="1">
    <location>
        <position position="123"/>
    </location>
    <ligand>
        <name>phosphoenolpyruvate</name>
        <dbReference type="ChEBI" id="CHEBI:58702"/>
    </ligand>
</feature>
<feature type="binding site" evidence="1">
    <location>
        <position position="167"/>
    </location>
    <ligand>
        <name>3-phosphoshikimate</name>
        <dbReference type="ChEBI" id="CHEBI:145989"/>
    </ligand>
</feature>
<feature type="binding site" evidence="1">
    <location>
        <position position="169"/>
    </location>
    <ligand>
        <name>3-phosphoshikimate</name>
        <dbReference type="ChEBI" id="CHEBI:145989"/>
    </ligand>
</feature>
<feature type="binding site" evidence="1">
    <location>
        <position position="169"/>
    </location>
    <ligand>
        <name>phosphoenolpyruvate</name>
        <dbReference type="ChEBI" id="CHEBI:58702"/>
    </ligand>
</feature>
<feature type="binding site" evidence="1">
    <location>
        <position position="315"/>
    </location>
    <ligand>
        <name>3-phosphoshikimate</name>
        <dbReference type="ChEBI" id="CHEBI:145989"/>
    </ligand>
</feature>
<feature type="binding site" evidence="1">
    <location>
        <position position="342"/>
    </location>
    <ligand>
        <name>3-phosphoshikimate</name>
        <dbReference type="ChEBI" id="CHEBI:145989"/>
    </ligand>
</feature>
<feature type="binding site" evidence="1">
    <location>
        <position position="346"/>
    </location>
    <ligand>
        <name>phosphoenolpyruvate</name>
        <dbReference type="ChEBI" id="CHEBI:58702"/>
    </ligand>
</feature>
<feature type="binding site" evidence="1">
    <location>
        <position position="387"/>
    </location>
    <ligand>
        <name>phosphoenolpyruvate</name>
        <dbReference type="ChEBI" id="CHEBI:58702"/>
    </ligand>
</feature>
<proteinExistence type="inferred from homology"/>
<organism>
    <name type="scientific">Coxiella burnetii (strain RSA 331 / Henzerling II)</name>
    <dbReference type="NCBI Taxonomy" id="360115"/>
    <lineage>
        <taxon>Bacteria</taxon>
        <taxon>Pseudomonadati</taxon>
        <taxon>Pseudomonadota</taxon>
        <taxon>Gammaproteobacteria</taxon>
        <taxon>Legionellales</taxon>
        <taxon>Coxiellaceae</taxon>
        <taxon>Coxiella</taxon>
    </lineage>
</organism>
<gene>
    <name evidence="1" type="primary">aroA</name>
    <name type="ordered locus">COXBURSA331_A0640</name>
</gene>
<keyword id="KW-0028">Amino-acid biosynthesis</keyword>
<keyword id="KW-0057">Aromatic amino acid biosynthesis</keyword>
<keyword id="KW-0963">Cytoplasm</keyword>
<keyword id="KW-0808">Transferase</keyword>
<comment type="function">
    <text evidence="1">Catalyzes the transfer of the enolpyruvyl moiety of phosphoenolpyruvate (PEP) to the 5-hydroxyl of shikimate-3-phosphate (S3P) to produce enolpyruvyl shikimate-3-phosphate and inorganic phosphate.</text>
</comment>
<comment type="catalytic activity">
    <reaction evidence="1">
        <text>3-phosphoshikimate + phosphoenolpyruvate = 5-O-(1-carboxyvinyl)-3-phosphoshikimate + phosphate</text>
        <dbReference type="Rhea" id="RHEA:21256"/>
        <dbReference type="ChEBI" id="CHEBI:43474"/>
        <dbReference type="ChEBI" id="CHEBI:57701"/>
        <dbReference type="ChEBI" id="CHEBI:58702"/>
        <dbReference type="ChEBI" id="CHEBI:145989"/>
        <dbReference type="EC" id="2.5.1.19"/>
    </reaction>
    <physiologicalReaction direction="left-to-right" evidence="1">
        <dbReference type="Rhea" id="RHEA:21257"/>
    </physiologicalReaction>
</comment>
<comment type="pathway">
    <text evidence="1">Metabolic intermediate biosynthesis; chorismate biosynthesis; chorismate from D-erythrose 4-phosphate and phosphoenolpyruvate: step 6/7.</text>
</comment>
<comment type="subunit">
    <text evidence="1">Monomer.</text>
</comment>
<comment type="subcellular location">
    <subcellularLocation>
        <location evidence="1">Cytoplasm</location>
    </subcellularLocation>
</comment>
<comment type="similarity">
    <text evidence="1">Belongs to the EPSP synthase family.</text>
</comment>
<sequence>MDYQTIPSQGLSGEICVPGDKSISHRAVLLVAIAEGQTQVDGFLMGADNLAMVSALQQMGASIQVIEDENILVVEGVGMTGLQAPPEALDCGNSGTAIRLLSGLLAGQPFNTVLTGDSSLQRRPMKRIIDPLTLMGAKIDSTGNVPPLKIYGNPRLTGIHYQLPMASAQVKSCLLLAGLYARGKTCITEPAPSRDHTERLLKHFHYTLQKDKQSICVSGGGKLKANDISIPGDISSAAFFIVAATITPGSAIRLCRVGVNPTRLGVINLLKMMGADIEVTHYTEKNEEPTADITVRHARLKGIDIPPDQVLLTIDEFPVLLIAAAVAQGKTVLRDAAELRVKETDRIAAMVDGLQKLGIAAESLPDGVIIQGGTLEGGEVNSYDDHRIAMAFAVAGTLAKGPVRIRNCDNVKTSFPNFVELANEVGMNVKGVRGRGGF</sequence>
<evidence type="ECO:0000255" key="1">
    <source>
        <dbReference type="HAMAP-Rule" id="MF_00210"/>
    </source>
</evidence>